<keyword id="KW-0148">Chlorophyll</keyword>
<keyword id="KW-0150">Chloroplast</keyword>
<keyword id="KW-0157">Chromophore</keyword>
<keyword id="KW-0472">Membrane</keyword>
<keyword id="KW-0602">Photosynthesis</keyword>
<keyword id="KW-0604">Photosystem II</keyword>
<keyword id="KW-0934">Plastid</keyword>
<keyword id="KW-0793">Thylakoid</keyword>
<keyword id="KW-0812">Transmembrane</keyword>
<keyword id="KW-1133">Transmembrane helix</keyword>
<dbReference type="EMBL" id="DQ069651">
    <property type="protein sequence ID" value="AAZ04083.1"/>
    <property type="molecule type" value="Genomic_DNA"/>
</dbReference>
<dbReference type="EMBL" id="DQ354691">
    <property type="protein sequence ID" value="ABC60484.1"/>
    <property type="molecule type" value="Genomic_DNA"/>
</dbReference>
<dbReference type="RefSeq" id="YP_001001560.1">
    <property type="nucleotide sequence ID" value="NC_008788.1"/>
</dbReference>
<dbReference type="SMR" id="Q4FFN0"/>
<dbReference type="GeneID" id="4699665"/>
<dbReference type="GO" id="GO:0009535">
    <property type="term" value="C:chloroplast thylakoid membrane"/>
    <property type="evidence" value="ECO:0007669"/>
    <property type="project" value="UniProtKB-SubCell"/>
</dbReference>
<dbReference type="GO" id="GO:0009523">
    <property type="term" value="C:photosystem II"/>
    <property type="evidence" value="ECO:0007669"/>
    <property type="project" value="UniProtKB-KW"/>
</dbReference>
<dbReference type="GO" id="GO:0016168">
    <property type="term" value="F:chlorophyll binding"/>
    <property type="evidence" value="ECO:0007669"/>
    <property type="project" value="UniProtKB-UniRule"/>
</dbReference>
<dbReference type="GO" id="GO:0045156">
    <property type="term" value="F:electron transporter, transferring electrons within the cyclic electron transport pathway of photosynthesis activity"/>
    <property type="evidence" value="ECO:0007669"/>
    <property type="project" value="InterPro"/>
</dbReference>
<dbReference type="GO" id="GO:0009772">
    <property type="term" value="P:photosynthetic electron transport in photosystem II"/>
    <property type="evidence" value="ECO:0007669"/>
    <property type="project" value="InterPro"/>
</dbReference>
<dbReference type="FunFam" id="3.10.680.10:FF:000001">
    <property type="entry name" value="Photosystem II CP47 reaction center protein"/>
    <property type="match status" value="1"/>
</dbReference>
<dbReference type="Gene3D" id="3.10.680.10">
    <property type="entry name" value="Photosystem II CP47 reaction center protein"/>
    <property type="match status" value="1"/>
</dbReference>
<dbReference type="HAMAP" id="MF_01495">
    <property type="entry name" value="PSII_PsbB_CP47"/>
    <property type="match status" value="1"/>
</dbReference>
<dbReference type="InterPro" id="IPR000932">
    <property type="entry name" value="PS_antenna-like"/>
</dbReference>
<dbReference type="InterPro" id="IPR036001">
    <property type="entry name" value="PS_II_antenna-like_sf"/>
</dbReference>
<dbReference type="InterPro" id="IPR017486">
    <property type="entry name" value="PSII_PsbB"/>
</dbReference>
<dbReference type="NCBIfam" id="TIGR03039">
    <property type="entry name" value="PS_II_CP47"/>
    <property type="match status" value="1"/>
</dbReference>
<dbReference type="PANTHER" id="PTHR33180">
    <property type="entry name" value="PHOTOSYSTEM II CP43 REACTION CENTER PROTEIN"/>
    <property type="match status" value="1"/>
</dbReference>
<dbReference type="PANTHER" id="PTHR33180:SF37">
    <property type="entry name" value="PHOTOSYSTEM II CP43 REACTION CENTER PROTEIN"/>
    <property type="match status" value="1"/>
</dbReference>
<dbReference type="Pfam" id="PF00421">
    <property type="entry name" value="PSII"/>
    <property type="match status" value="1"/>
</dbReference>
<dbReference type="SUPFAM" id="SSF161077">
    <property type="entry name" value="Photosystem II antenna protein-like"/>
    <property type="match status" value="1"/>
</dbReference>
<sequence>MGLPWYRVHTVVLNDPGRLLSVHIMHTALVSGWAGSMALYELAVFDPSDPVLDPMWRQGMFVIPFMTRLGITNSWGGWSITGGTITNPGIWSYEGVAGAHIVFSGLCFLAAIWHWVYWDLEIFCDERTGKPSLDLPKIFGIHLFLSGVACFGFGAFHVTGLYGPGIWVSDPYGLTGKVQPISPSWGAEGFDPFVPGGIASHHIAAGTLGILAGLFHLSVRPPQRLYKALRMGNIETVLSSSIAAVFFAAFVVAGTMWYGSATTPIELFGPTRYQWDQGYFQQEIYRRVNAGLAENLSLSESWSKIPDKLAFYDYIGNNPAKGGLFRAGSMDNGDGIAVGWLGHPIFRDKEGHELFVRRMPTFFETFPVVLVDGDGIVRADVPFRRAESKYSVEQVGVTVEFYGGELDGVSYNDPATVKKYARRAQLGEIFELDRATLKSDGVFRSSPRGWFTFGHASFALLFFFGHIWHGARTLFRDVFAGIDPDLDAQVEFGTFQKLGDPTTRRQVV</sequence>
<name>PSBB_NUPAD</name>
<protein>
    <recommendedName>
        <fullName evidence="1">Photosystem II CP47 reaction center protein</fullName>
    </recommendedName>
    <alternativeName>
        <fullName evidence="1">PSII 47 kDa protein</fullName>
    </alternativeName>
    <alternativeName>
        <fullName evidence="1">Protein CP-47</fullName>
    </alternativeName>
</protein>
<gene>
    <name evidence="1" type="primary">psbB</name>
</gene>
<reference key="1">
    <citation type="journal article" date="2005" name="Mol. Biol. Evol.">
        <title>Identifying the basal angiosperm node in chloroplast genome phylogenies: sampling one's way out of the Felsenstein zone.</title>
        <authorList>
            <person name="Leebens-Mack J."/>
            <person name="Raubeson L.A."/>
            <person name="Cui L."/>
            <person name="Kuehl J.V."/>
            <person name="Fourcade M.H."/>
            <person name="Chumley T.W."/>
            <person name="Boore J.L."/>
            <person name="Jansen R.K."/>
            <person name="dePamphilis C.W."/>
        </authorList>
    </citation>
    <scope>NUCLEOTIDE SEQUENCE [GENOMIC DNA]</scope>
</reference>
<reference key="2">
    <citation type="journal article" date="2007" name="BMC Genomics">
        <title>Comparative chloroplast genomics: analyses including new sequences from the angiosperms Nuphar advena and Ranunculus macranthus.</title>
        <authorList>
            <person name="Raubeson L.A."/>
            <person name="Peery R."/>
            <person name="Chumley T.W."/>
            <person name="Dziubek C."/>
            <person name="Fourcade H.M."/>
            <person name="Boore J.L."/>
            <person name="Jansen R.K."/>
        </authorList>
    </citation>
    <scope>NUCLEOTIDE SEQUENCE [LARGE SCALE GENOMIC DNA]</scope>
</reference>
<accession>Q4FFN0</accession>
<feature type="chain" id="PRO_0000359845" description="Photosystem II CP47 reaction center protein">
    <location>
        <begin position="1"/>
        <end position="508"/>
    </location>
</feature>
<feature type="transmembrane region" description="Helical" evidence="1">
    <location>
        <begin position="21"/>
        <end position="36"/>
    </location>
</feature>
<feature type="transmembrane region" description="Helical" evidence="1">
    <location>
        <begin position="101"/>
        <end position="115"/>
    </location>
</feature>
<feature type="transmembrane region" description="Helical" evidence="1">
    <location>
        <begin position="140"/>
        <end position="156"/>
    </location>
</feature>
<feature type="transmembrane region" description="Helical" evidence="1">
    <location>
        <begin position="203"/>
        <end position="218"/>
    </location>
</feature>
<feature type="transmembrane region" description="Helical" evidence="1">
    <location>
        <begin position="237"/>
        <end position="252"/>
    </location>
</feature>
<feature type="transmembrane region" description="Helical" evidence="1">
    <location>
        <begin position="457"/>
        <end position="472"/>
    </location>
</feature>
<geneLocation type="chloroplast"/>
<proteinExistence type="inferred from homology"/>
<organism>
    <name type="scientific">Nuphar advena</name>
    <name type="common">Common spatterdock</name>
    <name type="synonym">Nuphar lutea subsp. advena</name>
    <dbReference type="NCBI Taxonomy" id="77108"/>
    <lineage>
        <taxon>Eukaryota</taxon>
        <taxon>Viridiplantae</taxon>
        <taxon>Streptophyta</taxon>
        <taxon>Embryophyta</taxon>
        <taxon>Tracheophyta</taxon>
        <taxon>Spermatophyta</taxon>
        <taxon>Magnoliopsida</taxon>
        <taxon>Nymphaeales</taxon>
        <taxon>Nymphaeaceae</taxon>
        <taxon>Nuphar</taxon>
    </lineage>
</organism>
<evidence type="ECO:0000255" key="1">
    <source>
        <dbReference type="HAMAP-Rule" id="MF_01495"/>
    </source>
</evidence>
<comment type="function">
    <text evidence="1">One of the components of the core complex of photosystem II (PSII). It binds chlorophyll and helps catalyze the primary light-induced photochemical processes of PSII. PSII is a light-driven water:plastoquinone oxidoreductase, using light energy to abstract electrons from H(2)O, generating O(2) and a proton gradient subsequently used for ATP formation.</text>
</comment>
<comment type="cofactor">
    <text evidence="1">Binds multiple chlorophylls. PSII binds additional chlorophylls, carotenoids and specific lipids.</text>
</comment>
<comment type="subunit">
    <text evidence="1">PSII is composed of 1 copy each of membrane proteins PsbA, PsbB, PsbC, PsbD, PsbE, PsbF, PsbH, PsbI, PsbJ, PsbK, PsbL, PsbM, PsbT, PsbX, PsbY, PsbZ, Psb30/Ycf12, at least 3 peripheral proteins of the oxygen-evolving complex and a large number of cofactors. It forms dimeric complexes.</text>
</comment>
<comment type="subcellular location">
    <subcellularLocation>
        <location evidence="1">Plastid</location>
        <location evidence="1">Chloroplast thylakoid membrane</location>
        <topology evidence="1">Multi-pass membrane protein</topology>
    </subcellularLocation>
</comment>
<comment type="similarity">
    <text evidence="1">Belongs to the PsbB/PsbC family. PsbB subfamily.</text>
</comment>